<comment type="function">
    <text evidence="1">Bidirectionally degrades single-stranded DNA into large acid-insoluble oligonucleotides, which are then degraded further into small acid-soluble oligonucleotides.</text>
</comment>
<comment type="catalytic activity">
    <reaction evidence="1">
        <text>Exonucleolytic cleavage in either 5'- to 3'- or 3'- to 5'-direction to yield nucleoside 5'-phosphates.</text>
        <dbReference type="EC" id="3.1.11.6"/>
    </reaction>
</comment>
<comment type="subunit">
    <text evidence="1">Heterooligomer composed of large and small subunits.</text>
</comment>
<comment type="subcellular location">
    <subcellularLocation>
        <location evidence="1">Cytoplasm</location>
    </subcellularLocation>
</comment>
<comment type="similarity">
    <text evidence="1">Belongs to the XseA family.</text>
</comment>
<sequence>MSDYLSVSSLTKYLKLKFDRDPYLERVYLTGQVSNFRRRPNHQYFSLKDEKAVIQATMWSGIYRKLGFELEEGMKINVIGRVQLYEPSGSYSIIIEKAEPDGIGALAVQFEQLKKKLAEAGYFDDRHKQRLSQFVKKIGVVTSPSGAVIRDIITTVSRRFPGVDILLFPTKVQGEGAAQEVADNIRLANERTDLDLLIVGRGGGSIEDLWAFNEEIVVQAIFESHLPIISSVGHETDTTLADFAADRRAATPTAAAELATPVTKADLLAFLKERQMRSYQAVMRLIRQKDEQVKKLQRSVIFRQPERLYDAYVQKLDHLRTHLLTKVRQVYDVYDSKEHLLRQRLLSFNLSGCIQRYQAQLKQDQRLLLSHMSSQYDSKLARFEKAQDALLSLDTTRIVARGYAIVQKDNHIIQSTQQIKKGDRLHLEMKDGQVQVEVENVKQEENI</sequence>
<organism>
    <name type="scientific">Streptococcus mutans serotype c (strain ATCC 700610 / UA159)</name>
    <dbReference type="NCBI Taxonomy" id="210007"/>
    <lineage>
        <taxon>Bacteria</taxon>
        <taxon>Bacillati</taxon>
        <taxon>Bacillota</taxon>
        <taxon>Bacilli</taxon>
        <taxon>Lactobacillales</taxon>
        <taxon>Streptococcaceae</taxon>
        <taxon>Streptococcus</taxon>
    </lineage>
</organism>
<keyword id="KW-0963">Cytoplasm</keyword>
<keyword id="KW-0269">Exonuclease</keyword>
<keyword id="KW-0378">Hydrolase</keyword>
<keyword id="KW-0540">Nuclease</keyword>
<keyword id="KW-1185">Reference proteome</keyword>
<accession>Q8DVB5</accession>
<name>EX7L_STRMU</name>
<proteinExistence type="inferred from homology"/>
<gene>
    <name evidence="1" type="primary">xseA</name>
    <name type="ordered locus">SMU_580</name>
</gene>
<evidence type="ECO:0000255" key="1">
    <source>
        <dbReference type="HAMAP-Rule" id="MF_00378"/>
    </source>
</evidence>
<dbReference type="EC" id="3.1.11.6" evidence="1"/>
<dbReference type="EMBL" id="AE014133">
    <property type="protein sequence ID" value="AAN58319.1"/>
    <property type="molecule type" value="Genomic_DNA"/>
</dbReference>
<dbReference type="RefSeq" id="NP_721013.1">
    <property type="nucleotide sequence ID" value="NC_004350.2"/>
</dbReference>
<dbReference type="RefSeq" id="WP_002262108.1">
    <property type="nucleotide sequence ID" value="NC_004350.2"/>
</dbReference>
<dbReference type="SMR" id="Q8DVB5"/>
<dbReference type="STRING" id="210007.SMU_580"/>
<dbReference type="KEGG" id="smu:SMU_580"/>
<dbReference type="PATRIC" id="fig|210007.7.peg.513"/>
<dbReference type="eggNOG" id="COG1570">
    <property type="taxonomic scope" value="Bacteria"/>
</dbReference>
<dbReference type="HOGENOM" id="CLU_023625_3_1_9"/>
<dbReference type="OrthoDB" id="9802795at2"/>
<dbReference type="PhylomeDB" id="Q8DVB5"/>
<dbReference type="Proteomes" id="UP000002512">
    <property type="component" value="Chromosome"/>
</dbReference>
<dbReference type="GO" id="GO:0005737">
    <property type="term" value="C:cytoplasm"/>
    <property type="evidence" value="ECO:0007669"/>
    <property type="project" value="UniProtKB-SubCell"/>
</dbReference>
<dbReference type="GO" id="GO:0009318">
    <property type="term" value="C:exodeoxyribonuclease VII complex"/>
    <property type="evidence" value="ECO:0007669"/>
    <property type="project" value="InterPro"/>
</dbReference>
<dbReference type="GO" id="GO:0008855">
    <property type="term" value="F:exodeoxyribonuclease VII activity"/>
    <property type="evidence" value="ECO:0007669"/>
    <property type="project" value="UniProtKB-UniRule"/>
</dbReference>
<dbReference type="GO" id="GO:0003676">
    <property type="term" value="F:nucleic acid binding"/>
    <property type="evidence" value="ECO:0007669"/>
    <property type="project" value="InterPro"/>
</dbReference>
<dbReference type="GO" id="GO:0006308">
    <property type="term" value="P:DNA catabolic process"/>
    <property type="evidence" value="ECO:0007669"/>
    <property type="project" value="UniProtKB-UniRule"/>
</dbReference>
<dbReference type="CDD" id="cd04489">
    <property type="entry name" value="ExoVII_LU_OBF"/>
    <property type="match status" value="1"/>
</dbReference>
<dbReference type="HAMAP" id="MF_00378">
    <property type="entry name" value="Exonuc_7_L"/>
    <property type="match status" value="1"/>
</dbReference>
<dbReference type="InterPro" id="IPR003753">
    <property type="entry name" value="Exonuc_VII_L"/>
</dbReference>
<dbReference type="InterPro" id="IPR020579">
    <property type="entry name" value="Exonuc_VII_lsu_C"/>
</dbReference>
<dbReference type="InterPro" id="IPR025824">
    <property type="entry name" value="OB-fold_nuc-bd_dom"/>
</dbReference>
<dbReference type="NCBIfam" id="TIGR00237">
    <property type="entry name" value="xseA"/>
    <property type="match status" value="1"/>
</dbReference>
<dbReference type="PANTHER" id="PTHR30008">
    <property type="entry name" value="EXODEOXYRIBONUCLEASE 7 LARGE SUBUNIT"/>
    <property type="match status" value="1"/>
</dbReference>
<dbReference type="PANTHER" id="PTHR30008:SF0">
    <property type="entry name" value="EXODEOXYRIBONUCLEASE 7 LARGE SUBUNIT"/>
    <property type="match status" value="1"/>
</dbReference>
<dbReference type="Pfam" id="PF02601">
    <property type="entry name" value="Exonuc_VII_L"/>
    <property type="match status" value="1"/>
</dbReference>
<dbReference type="Pfam" id="PF13742">
    <property type="entry name" value="tRNA_anti_2"/>
    <property type="match status" value="1"/>
</dbReference>
<reference key="1">
    <citation type="journal article" date="2002" name="Proc. Natl. Acad. Sci. U.S.A.">
        <title>Genome sequence of Streptococcus mutans UA159, a cariogenic dental pathogen.</title>
        <authorList>
            <person name="Ajdic D.J."/>
            <person name="McShan W.M."/>
            <person name="McLaughlin R.E."/>
            <person name="Savic G."/>
            <person name="Chang J."/>
            <person name="Carson M.B."/>
            <person name="Primeaux C."/>
            <person name="Tian R."/>
            <person name="Kenton S."/>
            <person name="Jia H.G."/>
            <person name="Lin S.P."/>
            <person name="Qian Y."/>
            <person name="Li S."/>
            <person name="Zhu H."/>
            <person name="Najar F.Z."/>
            <person name="Lai H."/>
            <person name="White J."/>
            <person name="Roe B.A."/>
            <person name="Ferretti J.J."/>
        </authorList>
    </citation>
    <scope>NUCLEOTIDE SEQUENCE [LARGE SCALE GENOMIC DNA]</scope>
    <source>
        <strain>ATCC 700610 / UA159</strain>
    </source>
</reference>
<protein>
    <recommendedName>
        <fullName evidence="1">Exodeoxyribonuclease 7 large subunit</fullName>
        <ecNumber evidence="1">3.1.11.6</ecNumber>
    </recommendedName>
    <alternativeName>
        <fullName evidence="1">Exodeoxyribonuclease VII large subunit</fullName>
        <shortName evidence="1">Exonuclease VII large subunit</shortName>
    </alternativeName>
</protein>
<feature type="chain" id="PRO_0000197890" description="Exodeoxyribonuclease 7 large subunit">
    <location>
        <begin position="1"/>
        <end position="447"/>
    </location>
</feature>